<evidence type="ECO:0000250" key="1">
    <source>
        <dbReference type="UniProtKB" id="P03700"/>
    </source>
</evidence>
<evidence type="ECO:0000255" key="2">
    <source>
        <dbReference type="PROSITE-ProRule" id="PRU01246"/>
    </source>
</evidence>
<evidence type="ECO:0000255" key="3">
    <source>
        <dbReference type="PROSITE-ProRule" id="PRU01248"/>
    </source>
</evidence>
<evidence type="ECO:0000305" key="4"/>
<dbReference type="EC" id="2.7.7.-" evidence="1"/>
<dbReference type="EC" id="3.1.-.-" evidence="1"/>
<dbReference type="EMBL" id="X70352">
    <property type="protein sequence ID" value="CAA49810.1"/>
    <property type="status" value="ALT_INIT"/>
    <property type="molecule type" value="Genomic_DNA"/>
</dbReference>
<dbReference type="EMBL" id="U81553">
    <property type="protein sequence ID" value="AAB69102.1"/>
    <property type="status" value="ALT_INIT"/>
    <property type="molecule type" value="Genomic_DNA"/>
</dbReference>
<dbReference type="EMBL" id="AF022214">
    <property type="protein sequence ID" value="AAC18476.2"/>
    <property type="molecule type" value="Genomic_DNA"/>
</dbReference>
<dbReference type="PIR" id="H72803">
    <property type="entry name" value="H72803"/>
</dbReference>
<dbReference type="RefSeq" id="NP_046850.1">
    <property type="nucleotide sequence ID" value="NC_001900.1"/>
</dbReference>
<dbReference type="SMR" id="Q38361"/>
<dbReference type="GeneID" id="1261563"/>
<dbReference type="KEGG" id="vg:1261563"/>
<dbReference type="OrthoDB" id="4255at10239"/>
<dbReference type="Proteomes" id="UP000002131">
    <property type="component" value="Segment"/>
</dbReference>
<dbReference type="GO" id="GO:0003677">
    <property type="term" value="F:DNA binding"/>
    <property type="evidence" value="ECO:0007669"/>
    <property type="project" value="UniProtKB-KW"/>
</dbReference>
<dbReference type="GO" id="GO:0016787">
    <property type="term" value="F:hydrolase activity"/>
    <property type="evidence" value="ECO:0007669"/>
    <property type="project" value="UniProtKB-KW"/>
</dbReference>
<dbReference type="GO" id="GO:0016740">
    <property type="term" value="F:transferase activity"/>
    <property type="evidence" value="ECO:0007669"/>
    <property type="project" value="UniProtKB-KW"/>
</dbReference>
<dbReference type="GO" id="GO:0015074">
    <property type="term" value="P:DNA integration"/>
    <property type="evidence" value="ECO:0007669"/>
    <property type="project" value="UniProtKB-KW"/>
</dbReference>
<dbReference type="GO" id="GO:0006310">
    <property type="term" value="P:DNA recombination"/>
    <property type="evidence" value="ECO:0007669"/>
    <property type="project" value="UniProtKB-KW"/>
</dbReference>
<dbReference type="GO" id="GO:0075713">
    <property type="term" value="P:establishment of integrated proviral latency"/>
    <property type="evidence" value="ECO:0007669"/>
    <property type="project" value="UniProtKB-KW"/>
</dbReference>
<dbReference type="GO" id="GO:0046718">
    <property type="term" value="P:symbiont entry into host cell"/>
    <property type="evidence" value="ECO:0007669"/>
    <property type="project" value="UniProtKB-KW"/>
</dbReference>
<dbReference type="GO" id="GO:0044826">
    <property type="term" value="P:viral genome integration into host DNA"/>
    <property type="evidence" value="ECO:0007669"/>
    <property type="project" value="UniProtKB-KW"/>
</dbReference>
<dbReference type="CDD" id="cd01189">
    <property type="entry name" value="INT_ICEBs1_C_like"/>
    <property type="match status" value="1"/>
</dbReference>
<dbReference type="Gene3D" id="1.10.150.130">
    <property type="match status" value="1"/>
</dbReference>
<dbReference type="Gene3D" id="1.10.443.10">
    <property type="entry name" value="Intergrase catalytic core"/>
    <property type="match status" value="1"/>
</dbReference>
<dbReference type="InterPro" id="IPR044068">
    <property type="entry name" value="CB"/>
</dbReference>
<dbReference type="InterPro" id="IPR011010">
    <property type="entry name" value="DNA_brk_join_enz"/>
</dbReference>
<dbReference type="InterPro" id="IPR013762">
    <property type="entry name" value="Integrase-like_cat_sf"/>
</dbReference>
<dbReference type="InterPro" id="IPR002104">
    <property type="entry name" value="Integrase_catalytic"/>
</dbReference>
<dbReference type="InterPro" id="IPR010998">
    <property type="entry name" value="Integrase_recombinase_N"/>
</dbReference>
<dbReference type="InterPro" id="IPR050090">
    <property type="entry name" value="Tyrosine_recombinase_XerCD"/>
</dbReference>
<dbReference type="PANTHER" id="PTHR30349">
    <property type="entry name" value="PHAGE INTEGRASE-RELATED"/>
    <property type="match status" value="1"/>
</dbReference>
<dbReference type="PANTHER" id="PTHR30349:SF64">
    <property type="entry name" value="PROPHAGE INTEGRASE INTD-RELATED"/>
    <property type="match status" value="1"/>
</dbReference>
<dbReference type="Pfam" id="PF00589">
    <property type="entry name" value="Phage_integrase"/>
    <property type="match status" value="1"/>
</dbReference>
<dbReference type="SUPFAM" id="SSF56349">
    <property type="entry name" value="DNA breaking-rejoining enzymes"/>
    <property type="match status" value="1"/>
</dbReference>
<dbReference type="PROSITE" id="PS51900">
    <property type="entry name" value="CB"/>
    <property type="match status" value="1"/>
</dbReference>
<dbReference type="PROSITE" id="PS51898">
    <property type="entry name" value="TYR_RECOMBINASE"/>
    <property type="match status" value="1"/>
</dbReference>
<sequence length="374" mass="42051">MAARRRGWGSLRTQRSGRVQASYVSPIDGQRYFGPRNYDNRMDAEAWLASEKRLIDNEEWTPPAEREKKAAASAITVEEYTKKWIAERDLAGGTKDLYSTHARKRIYPVLGDTPVAEMTPALVRAWWAGMGKQYPTARRHAYNVLRAVMNTAVEDKLVSENPCRIEQKAPAERDVEALTPEELDVVAGEVFEHYRVAVYILAWTSLRFGELIEIRRKDIVDDGETMKLRVRRGAARVGEKIVVGNTKTVRSKRPVTVPPHVAAMIREHMADRTKMNKGPEALLVTTTRGQRLSKSAFTRSLKKGYAKIGRPDLRIHDLRAVGATLAAQAGATTKELMVRLGHTTPRMAMKYQMASAARDEEIARRMSELAGITP</sequence>
<keyword id="KW-0229">DNA integration</keyword>
<keyword id="KW-0233">DNA recombination</keyword>
<keyword id="KW-0238">DNA-binding</keyword>
<keyword id="KW-0378">Hydrolase</keyword>
<keyword id="KW-1185">Reference proteome</keyword>
<keyword id="KW-0808">Transferase</keyword>
<keyword id="KW-1179">Viral genome integration</keyword>
<keyword id="KW-1160">Virus entry into host cell</keyword>
<accession>Q38361</accession>
<comment type="function">
    <text>Integrase is necessary for integration of the phage into the host genome by site-specific recombination.</text>
</comment>
<comment type="similarity">
    <text evidence="4">Belongs to the 'phage' integrase family.</text>
</comment>
<comment type="sequence caution" evidence="4">
    <conflict type="erroneous initiation">
        <sequence resource="EMBL-CDS" id="AAB69102"/>
    </conflict>
</comment>
<comment type="sequence caution" evidence="4">
    <conflict type="erroneous initiation">
        <sequence resource="EMBL-CDS" id="CAA49810"/>
    </conflict>
</comment>
<reference key="1">
    <citation type="submission" date="1993-02" db="EMBL/GenBank/DDBJ databases">
        <title>DNA sequence and analysis of the mycrobacteriophage D29 origin and its integrase-like protein.</title>
        <authorList>
            <person name="Suissa M."/>
            <person name="Wyse J."/>
            <person name="Bar-On T."/>
            <person name="Kuhn J."/>
        </authorList>
    </citation>
    <scope>NUCLEOTIDE SEQUENCE [GENOMIC DNA]</scope>
</reference>
<reference key="2">
    <citation type="journal article" date="1997" name="Microbiology">
        <title>Mycobacteriophage D29 contains an integration system similar to that of the temperate mycobacteriophage L5.</title>
        <authorList>
            <person name="Ribeiro G."/>
            <person name="Viveiros M."/>
            <person name="David H.L."/>
            <person name="Costa J.V."/>
        </authorList>
    </citation>
    <scope>NUCLEOTIDE SEQUENCE [GENOMIC DNA]</scope>
</reference>
<reference key="3">
    <citation type="journal article" date="1998" name="J. Mol. Biol.">
        <title>Genome structure of mycobacteriophage D29: implications for phage evolution.</title>
        <authorList>
            <person name="Ford M.E."/>
            <person name="Sarkis G.J."/>
            <person name="Belanger A.E."/>
            <person name="Hendrix R.W."/>
            <person name="Hatfull G.F."/>
        </authorList>
    </citation>
    <scope>NUCLEOTIDE SEQUENCE [LARGE SCALE GENOMIC DNA]</scope>
</reference>
<reference key="4">
    <citation type="submission" date="2021-06" db="EMBL/GenBank/DDBJ databases">
        <authorList>
            <person name="Ford M.E."/>
            <person name="Sarkis G.J."/>
            <person name="Belanger A.E."/>
            <person name="Hendrix R.W."/>
            <person name="Hatfull G.F."/>
        </authorList>
    </citation>
    <scope>SEQUENCE REVISION TO N-TERMINUS</scope>
</reference>
<name>VINT_BPMD2</name>
<feature type="chain" id="PRO_0000197503" description="Integrase">
    <location>
        <begin position="1"/>
        <end position="374"/>
    </location>
</feature>
<feature type="domain" description="Core-binding (CB)" evidence="3">
    <location>
        <begin position="75"/>
        <end position="153"/>
    </location>
</feature>
<feature type="domain" description="Tyr recombinase" evidence="2">
    <location>
        <begin position="173"/>
        <end position="364"/>
    </location>
</feature>
<feature type="active site" evidence="2">
    <location>
        <position position="207"/>
    </location>
</feature>
<feature type="active site" evidence="2">
    <location>
        <position position="247"/>
    </location>
</feature>
<feature type="active site" evidence="2">
    <location>
        <position position="316"/>
    </location>
</feature>
<feature type="active site" evidence="2">
    <location>
        <position position="319"/>
    </location>
</feature>
<feature type="active site" evidence="2">
    <location>
        <position position="342"/>
    </location>
</feature>
<feature type="active site" description="O-(3'-phospho-DNA)-tyrosine intermediate" evidence="2">
    <location>
        <position position="351"/>
    </location>
</feature>
<proteinExistence type="inferred from homology"/>
<gene>
    <name type="primary">33</name>
    <name type="synonym">int</name>
</gene>
<organismHost>
    <name type="scientific">Mycobacterium</name>
    <dbReference type="NCBI Taxonomy" id="1763"/>
</organismHost>
<organism>
    <name type="scientific">Mycobacterium phage D29</name>
    <name type="common">Mycobacteriophage D29</name>
    <dbReference type="NCBI Taxonomy" id="28369"/>
    <lineage>
        <taxon>Viruses</taxon>
        <taxon>Duplodnaviria</taxon>
        <taxon>Heunggongvirae</taxon>
        <taxon>Uroviricota</taxon>
        <taxon>Caudoviricetes</taxon>
        <taxon>Fromanvirus</taxon>
    </lineage>
</organism>
<protein>
    <recommendedName>
        <fullName>Integrase</fullName>
        <ecNumber evidence="1">2.7.7.-</ecNumber>
        <ecNumber evidence="1">3.1.-.-</ecNumber>
    </recommendedName>
</protein>